<comment type="function">
    <text evidence="1 6">Scaffolding protein involved in icosahedric procapsid assembly. Coassembles with capsid protein(s) to form the procapsid (PubMed:28984245). The scaffolding protein is found within the capsid as a series of concentric shells. During DNA packaging, the scaffolding protein molecules are released from the procapsid (By similarity).</text>
</comment>
<comment type="subunit">
    <text evidence="6">Found in the procapsid with the major capsid protein in a 2:1 capsid protein:scaffold protein molecular ratio (PubMed:28984245).</text>
</comment>
<comment type="subcellular location">
    <text evidence="3 4 6">Found in provirions but not in mature virions.</text>
</comment>
<comment type="domain">
    <text evidence="6">In the 80alpha procapsid the C-terminal 21 residues of SP form a helix-and-hook motif that interacts extensively with the major capsid protein, especially with the N-arm (approximately residues 26-70 in the capsid protein) (PubMed:28984245).</text>
</comment>
<comment type="PTM">
    <text evidence="5">The N-terminus is cleaved by ribosomal processing protease Prp (PubMed:25388641).</text>
</comment>
<comment type="mass spectrometry" mass="21700.5" error="0.07" method="Electrospray" evidence="4">
    <text>Mature form, residues 14-206.</text>
</comment>
<comment type="mass spectrometry" mass="21701.0" method="MALDI" evidence="5">
    <text>Mature form processed by Prp.</text>
</comment>
<comment type="miscellaneous">
    <text evidence="8">When the gene is mutated the virus becomes resistant to the host CBASS CdnE-Cap15 system without altering the production of 3',2'-cGAMP or cabRNA by host CdnE; the host Cap15 effector protein seems to be activated but the virus still completes its replication cycle (PubMed:37968393).</text>
</comment>
<keyword id="KW-0002">3D-structure</keyword>
<keyword id="KW-0903">Direct protein sequencing</keyword>
<keyword id="KW-0945">Host-virus interaction</keyword>
<keyword id="KW-1090">Inhibition of host innate immune response by virus</keyword>
<keyword id="KW-0426">Late protein</keyword>
<keyword id="KW-1185">Reference proteome</keyword>
<keyword id="KW-0118">Viral capsid assembly</keyword>
<keyword id="KW-0899">Viral immunoevasion</keyword>
<keyword id="KW-1188">Viral release from host cell</keyword>
<accession>A4ZFB2</accession>
<evidence type="ECO:0000250" key="1">
    <source>
        <dbReference type="UniProtKB" id="P13848"/>
    </source>
</evidence>
<evidence type="ECO:0000256" key="2">
    <source>
        <dbReference type="SAM" id="MobiDB-lite"/>
    </source>
</evidence>
<evidence type="ECO:0000269" key="3">
    <source>
    </source>
</evidence>
<evidence type="ECO:0000269" key="4">
    <source>
    </source>
</evidence>
<evidence type="ECO:0000269" key="5">
    <source>
    </source>
</evidence>
<evidence type="ECO:0000269" key="6">
    <source>
    </source>
</evidence>
<evidence type="ECO:0000269" key="7">
    <source>
    </source>
</evidence>
<evidence type="ECO:0000269" key="8">
    <source>
    </source>
</evidence>
<evidence type="ECO:0000303" key="9">
    <source>
    </source>
</evidence>
<evidence type="ECO:0000303" key="10">
    <source>
    </source>
</evidence>
<evidence type="ECO:0000303" key="11">
    <source>
    </source>
</evidence>
<evidence type="ECO:0000303" key="12">
    <source>
    </source>
</evidence>
<evidence type="ECO:0000303" key="13">
    <source>
    </source>
</evidence>
<evidence type="ECO:0000312" key="14">
    <source>
        <dbReference type="EMBL" id="ABF71617.1"/>
    </source>
</evidence>
<evidence type="ECO:0007744" key="15">
    <source>
        <dbReference type="PDB" id="6B0X"/>
    </source>
</evidence>
<protein>
    <recommendedName>
        <fullName evidence="9 11">Capsid assembly scaffolding protein</fullName>
        <shortName evidence="12">SP</shortName>
    </recommendedName>
    <alternativeName>
        <fullName evidence="13">Gp46 protein</fullName>
    </alternativeName>
</protein>
<gene>
    <name evidence="10" type="primary">gp46</name>
</gene>
<dbReference type="EMBL" id="DQ517338">
    <property type="protein sequence ID" value="ABF71617.1"/>
    <property type="molecule type" value="Genomic_DNA"/>
</dbReference>
<dbReference type="RefSeq" id="YP_001285360.1">
    <property type="nucleotide sequence ID" value="NC_009526.1"/>
</dbReference>
<dbReference type="PDB" id="6B0X">
    <property type="method" value="EM"/>
    <property type="resolution" value="3.72 A"/>
    <property type="chains" value="a/b/c/d/e/f/g=191-206"/>
</dbReference>
<dbReference type="PDBsum" id="6B0X"/>
<dbReference type="EMDB" id="EMD-7030"/>
<dbReference type="SMR" id="A4ZFB2"/>
<dbReference type="KEGG" id="vg:5246935"/>
<dbReference type="OrthoDB" id="14655at10239"/>
<dbReference type="Proteomes" id="UP000201164">
    <property type="component" value="Segment"/>
</dbReference>
<dbReference type="GO" id="GO:0046806">
    <property type="term" value="C:viral scaffold"/>
    <property type="evidence" value="ECO:0000315"/>
    <property type="project" value="CACAO"/>
</dbReference>
<dbReference type="GO" id="GO:0052170">
    <property type="term" value="P:symbiont-mediated suppression of host innate immune response"/>
    <property type="evidence" value="ECO:0007669"/>
    <property type="project" value="UniProtKB-KW"/>
</dbReference>
<dbReference type="InterPro" id="IPR025580">
    <property type="entry name" value="Gp46"/>
</dbReference>
<dbReference type="Pfam" id="PF14265">
    <property type="entry name" value="DUF4355"/>
    <property type="match status" value="1"/>
</dbReference>
<proteinExistence type="evidence at protein level"/>
<organism>
    <name type="scientific">Staphylococcus phage 80alpha</name>
    <dbReference type="NCBI Taxonomy" id="53369"/>
    <lineage>
        <taxon>Viruses</taxon>
        <taxon>Duplodnaviria</taxon>
        <taxon>Heunggongvirae</taxon>
        <taxon>Uroviricota</taxon>
        <taxon>Caudoviricetes</taxon>
        <taxon>Azeredovirinae</taxon>
        <taxon>Dubowvirus</taxon>
    </lineage>
</organism>
<feature type="propeptide" id="PRO_0000459834" evidence="4 5">
    <location>
        <begin position="1"/>
        <end position="13"/>
    </location>
</feature>
<feature type="chain" id="PRO_0000459835" description="Capsid assembly scaffolding protein">
    <location>
        <begin position="14"/>
        <end position="206"/>
    </location>
</feature>
<feature type="region of interest" description="Disordered" evidence="2">
    <location>
        <begin position="1"/>
        <end position="50"/>
    </location>
</feature>
<feature type="region of interest" description="Disordered" evidence="2">
    <location>
        <begin position="83"/>
        <end position="134"/>
    </location>
</feature>
<feature type="region of interest" description="Disordered" evidence="2">
    <location>
        <begin position="173"/>
        <end position="206"/>
    </location>
</feature>
<feature type="region of interest" description="Helix-and-hook motif" evidence="6">
    <location>
        <begin position="186"/>
        <end position="206"/>
    </location>
</feature>
<feature type="compositionally biased region" description="Basic and acidic residues" evidence="2">
    <location>
        <begin position="25"/>
        <end position="38"/>
    </location>
</feature>
<feature type="compositionally biased region" description="Basic and acidic residues" evidence="2">
    <location>
        <begin position="83"/>
        <end position="127"/>
    </location>
</feature>
<feature type="compositionally biased region" description="Polar residues" evidence="2">
    <location>
        <begin position="173"/>
        <end position="192"/>
    </location>
</feature>
<feature type="mutagenesis site" description="No viable phage, greatly reduced levels of capsid protein, accumulates large numbers of tails." evidence="7">
    <original>EENKLKFNLQFF</original>
    <variation>AA</variation>
    <location>
        <begin position="2"/>
        <end position="13"/>
    </location>
</feature>
<feature type="mutagenesis site" description="Wild-type phage titer and viability." evidence="7">
    <location>
        <begin position="2"/>
        <end position="13"/>
    </location>
</feature>
<feature type="mutagenesis site" description="Virus escapes the CBASS system in host bacteria, allowing virus propagation. Phage still activates 3',2'-cGAMP production and makes wild-type cabRNA." evidence="8">
    <original>E</original>
    <variation>D</variation>
    <location>
        <position position="105"/>
    </location>
</feature>
<feature type="mutagenesis site" description="Slightly reduced phage titer." evidence="6">
    <original>STKNKPQNLAEIARQKRIIKN</original>
    <variation>KQKQYGTTLQNLAKQNRIIK</variation>
    <location>
        <begin position="186"/>
        <end position="206"/>
    </location>
</feature>
<feature type="mutagenesis site" description="Defective in producing infectious virions." evidence="6">
    <original>A</original>
    <variation>I</variation>
    <location>
        <position position="198"/>
    </location>
</feature>
<feature type="mutagenesis site" description="Defective in producing infectious virions." evidence="6">
    <original>R</original>
    <variation>E</variation>
    <variation>K</variation>
    <variation>S</variation>
    <location>
        <position position="202"/>
    </location>
</feature>
<feature type="mutagenesis site" description="Defective in producing infectious virions." evidence="6">
    <original>I</original>
    <variation>T</variation>
    <location>
        <position position="203"/>
    </location>
</feature>
<sequence length="206" mass="23371">MEENKLKFNLQFFADQSDDPDEPGGDGKKGNPDKKENDEGTEITFTPEQQKKVDEILERRVAHEKKKADEYAKEKAAEAAKEAAKLAKMNKDQKDEYEREQMEKELEQLRSEKQLNEMRSEARKMLSEAEVDSSDEVVNLVVTDTAEQTKSNVEAFSNAVKKAVNEAVKVNARQSPLTGGDSFNHSTKNKPQNLAEIARQKRIIKN</sequence>
<organismHost>
    <name type="scientific">Staphylococcus aureus</name>
    <dbReference type="NCBI Taxonomy" id="1280"/>
</organismHost>
<reference evidence="14" key="1">
    <citation type="journal article" date="2007" name="J. Bacteriol.">
        <title>Transducing particles of Staphylococcus aureus pathogenicity island SaPI1 are comprised of helper phage-encoded proteins.</title>
        <authorList>
            <person name="Tallent S.M."/>
            <person name="Langston T.B."/>
            <person name="Moran R.G."/>
            <person name="Christie G.E."/>
        </authorList>
    </citation>
    <scope>NUCLEOTIDE SEQUENCE [LARGE SCALE GENOMIC DNA]</scope>
    <scope>PROTEIN SEQUENCE OF 36-59; 124-162 AND 174-199</scope>
    <scope>SUBCELLULAR LOCATION</scope>
</reference>
<reference evidence="14" key="2">
    <citation type="journal article" date="2010" name="Virology">
        <title>The complete genomes of Staphylococcus aureus bacteriophages 80 and 80alpha--implications for the specificity of SaPI mobilization.</title>
        <authorList>
            <person name="Christie G.E."/>
            <person name="Matthews A.M."/>
            <person name="King D.G."/>
            <person name="Lane K.D."/>
            <person name="Olivarez N.P."/>
            <person name="Tallent S.M."/>
            <person name="Gill S.R."/>
            <person name="Novick R.P."/>
        </authorList>
    </citation>
    <scope>NUCLEOTIDE SEQUENCE [LARGE SCALE GENOMIC DNA]</scope>
</reference>
<reference key="3">
    <citation type="journal article" date="2008" name="J. Mol. Biol.">
        <title>Capsid size determination by Staphylococcus aureus pathogenicity island SaPI1 involves specific incorporation of SaPI1 proteins into procapsids.</title>
        <authorList>
            <person name="Poliakov A."/>
            <person name="Chang J.R."/>
            <person name="Spilman M.S."/>
            <person name="Damle P.K."/>
            <person name="Christie G.E."/>
            <person name="Mobley J.A."/>
            <person name="Dokland T."/>
        </authorList>
    </citation>
    <scope>SUBCELLULAR LOCATION</scope>
    <scope>MASS SPECTROMETRY</scope>
</reference>
<reference key="4">
    <citation type="journal article" date="2015" name="Mol. Microbiol.">
        <title>Specific N-terminal cleavage of ribosomal protein L27 in Staphylococcus aureus and related bacteria.</title>
        <authorList>
            <person name="Wall E.A."/>
            <person name="Caufield J.H."/>
            <person name="Lyons C.E."/>
            <person name="Manning K.A."/>
            <person name="Dokland T."/>
            <person name="Christie G.E."/>
        </authorList>
    </citation>
    <scope>PROTEOLYTIC CLEAVAGE</scope>
    <scope>MASS SPECTROMETRY</scope>
</reference>
<reference key="5">
    <citation type="journal article" date="2017" name="Viruses">
        <title>Cleavage and Structural Transitions during Maturation of Staphylococcus aureus Bacteriophage 80alpha and SaPI1 Capsids.</title>
        <authorList>
            <person name="Kizziah J.L."/>
            <person name="Manning K.A."/>
            <person name="Dearborn A.D."/>
            <person name="Wall E.A."/>
            <person name="Klenow L."/>
            <person name="Hill R.L.L."/>
            <person name="Spilman M.S."/>
            <person name="Stagg S.M."/>
            <person name="Christie G.E."/>
            <person name="Dokland T."/>
        </authorList>
    </citation>
    <scope>MUTAGENESIS OF 2-GLU--PHE-13</scope>
</reference>
<reference key="6">
    <citation type="journal article" date="2023" name="Nature">
        <title>Bacterial cGAS senses a viral RNA to initiate immunity.</title>
        <authorList>
            <person name="Banh D.V."/>
            <person name="Roberts C.G."/>
            <person name="Morales-Amador A."/>
            <person name="Berryhill B.A."/>
            <person name="Chaudhry W."/>
            <person name="Levin B.R."/>
            <person name="Brady S.F."/>
            <person name="Marraffini L.A."/>
        </authorList>
    </citation>
    <scope>CBASS RESISTANCE</scope>
    <scope>MUTAGENESIS OF GLU-105</scope>
</reference>
<reference evidence="15" key="7">
    <citation type="journal article" date="2017" name="Elife">
        <title>Competing scaffolding proteins determine capsid size during mobilization of Staphylococcus aureus pathogenicity islands.</title>
        <authorList>
            <person name="Dearborn A.D."/>
            <person name="Wall E.A."/>
            <person name="Kizziah J.L."/>
            <person name="Klenow L."/>
            <person name="Parker L.K."/>
            <person name="Manning K.A."/>
            <person name="Spilman M.S."/>
            <person name="Spear J.M."/>
            <person name="Christie G.E."/>
            <person name="Dokland T."/>
        </authorList>
    </citation>
    <scope>STRUCTURE BY ELECTRON MICROSCOPY (3.72 ANGSTROMS) OF 191-206</scope>
    <scope>FUNCTION</scope>
    <scope>SUBUNIT</scope>
    <scope>SUBCELLULAR LOCATION</scope>
    <scope>DOMAIN</scope>
    <scope>MUTAGENESIS OF 186-SER--ASN-206; ALA-198; ARG-202 AND ILE-203</scope>
</reference>
<name>SCAF_BP80A</name>